<protein>
    <recommendedName>
        <fullName evidence="1">tRNA pseudouridine synthase B</fullName>
        <ecNumber evidence="1">5.4.99.25</ecNumber>
    </recommendedName>
    <alternativeName>
        <fullName evidence="1">tRNA pseudouridine(55) synthase</fullName>
        <shortName evidence="1">Psi55 synthase</shortName>
    </alternativeName>
    <alternativeName>
        <fullName evidence="1">tRNA pseudouridylate synthase</fullName>
    </alternativeName>
    <alternativeName>
        <fullName evidence="1">tRNA-uridine isomerase</fullName>
    </alternativeName>
</protein>
<reference key="1">
    <citation type="journal article" date="2004" name="Genome Res.">
        <title>The genome sequence of Mycoplasma mycoides subsp. mycoides SC type strain PG1T, the causative agent of contagious bovine pleuropneumonia (CBPP).</title>
        <authorList>
            <person name="Westberg J."/>
            <person name="Persson A."/>
            <person name="Holmberg A."/>
            <person name="Goesmann A."/>
            <person name="Lundeberg J."/>
            <person name="Johansson K.-E."/>
            <person name="Pettersson B."/>
            <person name="Uhlen M."/>
        </authorList>
    </citation>
    <scope>NUCLEOTIDE SEQUENCE [LARGE SCALE GENOMIC DNA]</scope>
    <source>
        <strain>CCUG 32753 / NCTC 10114 / PG1</strain>
    </source>
</reference>
<feature type="chain" id="PRO_0000121867" description="tRNA pseudouridine synthase B">
    <location>
        <begin position="1"/>
        <end position="292"/>
    </location>
</feature>
<feature type="active site" description="Nucleophile" evidence="1">
    <location>
        <position position="40"/>
    </location>
</feature>
<dbReference type="EC" id="5.4.99.25" evidence="1"/>
<dbReference type="EMBL" id="BX293980">
    <property type="protein sequence ID" value="CAE76976.1"/>
    <property type="molecule type" value="Genomic_DNA"/>
</dbReference>
<dbReference type="RefSeq" id="NP_975334.1">
    <property type="nucleotide sequence ID" value="NC_005364.2"/>
</dbReference>
<dbReference type="RefSeq" id="WP_011166532.1">
    <property type="nucleotide sequence ID" value="NC_005364.2"/>
</dbReference>
<dbReference type="SMR" id="Q6MTR0"/>
<dbReference type="STRING" id="272632.MSC_0336"/>
<dbReference type="KEGG" id="mmy:MSC_0336"/>
<dbReference type="PATRIC" id="fig|272632.4.peg.362"/>
<dbReference type="eggNOG" id="COG0130">
    <property type="taxonomic scope" value="Bacteria"/>
</dbReference>
<dbReference type="HOGENOM" id="CLU_032087_0_2_14"/>
<dbReference type="Proteomes" id="UP000001016">
    <property type="component" value="Chromosome"/>
</dbReference>
<dbReference type="GO" id="GO:0003723">
    <property type="term" value="F:RNA binding"/>
    <property type="evidence" value="ECO:0007669"/>
    <property type="project" value="InterPro"/>
</dbReference>
<dbReference type="GO" id="GO:0160148">
    <property type="term" value="F:tRNA pseudouridine(55) synthase activity"/>
    <property type="evidence" value="ECO:0007669"/>
    <property type="project" value="UniProtKB-EC"/>
</dbReference>
<dbReference type="GO" id="GO:1990481">
    <property type="term" value="P:mRNA pseudouridine synthesis"/>
    <property type="evidence" value="ECO:0007669"/>
    <property type="project" value="TreeGrafter"/>
</dbReference>
<dbReference type="GO" id="GO:0031119">
    <property type="term" value="P:tRNA pseudouridine synthesis"/>
    <property type="evidence" value="ECO:0007669"/>
    <property type="project" value="UniProtKB-UniRule"/>
</dbReference>
<dbReference type="CDD" id="cd02573">
    <property type="entry name" value="PseudoU_synth_EcTruB"/>
    <property type="match status" value="1"/>
</dbReference>
<dbReference type="Gene3D" id="3.30.2350.10">
    <property type="entry name" value="Pseudouridine synthase"/>
    <property type="match status" value="1"/>
</dbReference>
<dbReference type="HAMAP" id="MF_01080">
    <property type="entry name" value="TruB_bact"/>
    <property type="match status" value="1"/>
</dbReference>
<dbReference type="InterPro" id="IPR020103">
    <property type="entry name" value="PsdUridine_synth_cat_dom_sf"/>
</dbReference>
<dbReference type="InterPro" id="IPR002501">
    <property type="entry name" value="PsdUridine_synth_N"/>
</dbReference>
<dbReference type="InterPro" id="IPR014780">
    <property type="entry name" value="tRNA_psdUridine_synth_TruB"/>
</dbReference>
<dbReference type="NCBIfam" id="TIGR00431">
    <property type="entry name" value="TruB"/>
    <property type="match status" value="1"/>
</dbReference>
<dbReference type="PANTHER" id="PTHR13767:SF2">
    <property type="entry name" value="PSEUDOURIDYLATE SYNTHASE TRUB1"/>
    <property type="match status" value="1"/>
</dbReference>
<dbReference type="PANTHER" id="PTHR13767">
    <property type="entry name" value="TRNA-PSEUDOURIDINE SYNTHASE"/>
    <property type="match status" value="1"/>
</dbReference>
<dbReference type="Pfam" id="PF01509">
    <property type="entry name" value="TruB_N"/>
    <property type="match status" value="1"/>
</dbReference>
<dbReference type="SUPFAM" id="SSF55120">
    <property type="entry name" value="Pseudouridine synthase"/>
    <property type="match status" value="1"/>
</dbReference>
<proteinExistence type="inferred from homology"/>
<accession>Q6MTR0</accession>
<sequence>MQKSGIFILNKPSNISTYQLINQVKKKLNIKKVGHCGTLDLLATGVVICLVNNATKISDYLLNANKAYQVKIKLFTLTDSFDAEGNIIQTQTPFNISLDQINKVISKYNNYTYNQYPPIYSSIKVDGKKLYEYALTNQNVEIKSRKVTIYKTSLLSYDQKNYEIFLDVKCSKGTYIRSLAVDICKDLNTIGYVVYLNRTLSGNFKLENAIDLNNISWDHLISINDAIRTNDFKVVKYQNSLEIIQGKKIILNDINDDLVFISDDQNNILAVYQKYDNNIFKIKRGGLNNDIY</sequence>
<name>TRUB_MYCMS</name>
<organism>
    <name type="scientific">Mycoplasma mycoides subsp. mycoides SC (strain CCUG 32753 / NCTC 10114 / PG1)</name>
    <dbReference type="NCBI Taxonomy" id="272632"/>
    <lineage>
        <taxon>Bacteria</taxon>
        <taxon>Bacillati</taxon>
        <taxon>Mycoplasmatota</taxon>
        <taxon>Mollicutes</taxon>
        <taxon>Mycoplasmataceae</taxon>
        <taxon>Mycoplasma</taxon>
    </lineage>
</organism>
<comment type="function">
    <text evidence="1">Responsible for synthesis of pseudouridine from uracil-55 in the psi GC loop of transfer RNAs.</text>
</comment>
<comment type="catalytic activity">
    <reaction evidence="1">
        <text>uridine(55) in tRNA = pseudouridine(55) in tRNA</text>
        <dbReference type="Rhea" id="RHEA:42532"/>
        <dbReference type="Rhea" id="RHEA-COMP:10101"/>
        <dbReference type="Rhea" id="RHEA-COMP:10102"/>
        <dbReference type="ChEBI" id="CHEBI:65314"/>
        <dbReference type="ChEBI" id="CHEBI:65315"/>
        <dbReference type="EC" id="5.4.99.25"/>
    </reaction>
</comment>
<comment type="similarity">
    <text evidence="1">Belongs to the pseudouridine synthase TruB family. Type 1 subfamily.</text>
</comment>
<keyword id="KW-0413">Isomerase</keyword>
<keyword id="KW-1185">Reference proteome</keyword>
<keyword id="KW-0819">tRNA processing</keyword>
<gene>
    <name evidence="1" type="primary">truB</name>
    <name type="ordered locus">MSC_0336</name>
</gene>
<evidence type="ECO:0000255" key="1">
    <source>
        <dbReference type="HAMAP-Rule" id="MF_01080"/>
    </source>
</evidence>